<sequence>MALKKASLACAVCGSRNYSIKISGNPKPTRLEVNKFCKHCGKYTTHRETR</sequence>
<evidence type="ECO:0000255" key="1">
    <source>
        <dbReference type="HAMAP-Rule" id="MF_00294"/>
    </source>
</evidence>
<keyword id="KW-1185">Reference proteome</keyword>
<keyword id="KW-0687">Ribonucleoprotein</keyword>
<keyword id="KW-0689">Ribosomal protein</keyword>
<dbReference type="EMBL" id="AE007317">
    <property type="protein sequence ID" value="AAL00625.1"/>
    <property type="molecule type" value="Genomic_DNA"/>
</dbReference>
<dbReference type="PIR" id="D98099">
    <property type="entry name" value="D98099"/>
</dbReference>
<dbReference type="RefSeq" id="NP_359414.1">
    <property type="nucleotide sequence ID" value="NC_003098.1"/>
</dbReference>
<dbReference type="SMR" id="Q8CWN7"/>
<dbReference type="STRING" id="171101.spr1822"/>
<dbReference type="KEGG" id="spr:spr1822"/>
<dbReference type="PATRIC" id="fig|171101.6.peg.1966"/>
<dbReference type="eggNOG" id="COG0267">
    <property type="taxonomic scope" value="Bacteria"/>
</dbReference>
<dbReference type="HOGENOM" id="CLU_190949_0_1_9"/>
<dbReference type="PRO" id="PR:Q8CWN7"/>
<dbReference type="Proteomes" id="UP000000586">
    <property type="component" value="Chromosome"/>
</dbReference>
<dbReference type="GO" id="GO:0005737">
    <property type="term" value="C:cytoplasm"/>
    <property type="evidence" value="ECO:0007669"/>
    <property type="project" value="UniProtKB-ARBA"/>
</dbReference>
<dbReference type="GO" id="GO:1990904">
    <property type="term" value="C:ribonucleoprotein complex"/>
    <property type="evidence" value="ECO:0007669"/>
    <property type="project" value="UniProtKB-KW"/>
</dbReference>
<dbReference type="GO" id="GO:0005840">
    <property type="term" value="C:ribosome"/>
    <property type="evidence" value="ECO:0007669"/>
    <property type="project" value="UniProtKB-KW"/>
</dbReference>
<dbReference type="GO" id="GO:0003735">
    <property type="term" value="F:structural constituent of ribosome"/>
    <property type="evidence" value="ECO:0007669"/>
    <property type="project" value="InterPro"/>
</dbReference>
<dbReference type="GO" id="GO:0006412">
    <property type="term" value="P:translation"/>
    <property type="evidence" value="ECO:0007669"/>
    <property type="project" value="UniProtKB-UniRule"/>
</dbReference>
<dbReference type="Gene3D" id="2.20.28.120">
    <property type="entry name" value="Ribosomal protein L33"/>
    <property type="match status" value="1"/>
</dbReference>
<dbReference type="HAMAP" id="MF_00294">
    <property type="entry name" value="Ribosomal_bL33"/>
    <property type="match status" value="1"/>
</dbReference>
<dbReference type="InterPro" id="IPR001705">
    <property type="entry name" value="Ribosomal_bL33"/>
</dbReference>
<dbReference type="InterPro" id="IPR038584">
    <property type="entry name" value="Ribosomal_bL33_sf"/>
</dbReference>
<dbReference type="InterPro" id="IPR011332">
    <property type="entry name" value="Ribosomal_zn-bd"/>
</dbReference>
<dbReference type="NCBIfam" id="NF001764">
    <property type="entry name" value="PRK00504.1"/>
    <property type="match status" value="1"/>
</dbReference>
<dbReference type="NCBIfam" id="TIGR01023">
    <property type="entry name" value="rpmG_bact"/>
    <property type="match status" value="1"/>
</dbReference>
<dbReference type="Pfam" id="PF00471">
    <property type="entry name" value="Ribosomal_L33"/>
    <property type="match status" value="1"/>
</dbReference>
<dbReference type="SUPFAM" id="SSF57829">
    <property type="entry name" value="Zn-binding ribosomal proteins"/>
    <property type="match status" value="1"/>
</dbReference>
<protein>
    <recommendedName>
        <fullName evidence="1">Large ribosomal subunit protein bL33B</fullName>
    </recommendedName>
    <alternativeName>
        <fullName evidence="1">50S ribosomal protein L33 2</fullName>
    </alternativeName>
</protein>
<accession>Q8CWN7</accession>
<proteinExistence type="inferred from homology"/>
<feature type="chain" id="PRO_0000170248" description="Large ribosomal subunit protein bL33B">
    <location>
        <begin position="1"/>
        <end position="50"/>
    </location>
</feature>
<name>RL332_STRR6</name>
<reference key="1">
    <citation type="journal article" date="2001" name="J. Bacteriol.">
        <title>Genome of the bacterium Streptococcus pneumoniae strain R6.</title>
        <authorList>
            <person name="Hoskins J."/>
            <person name="Alborn W.E. Jr."/>
            <person name="Arnold J."/>
            <person name="Blaszczak L.C."/>
            <person name="Burgett S."/>
            <person name="DeHoff B.S."/>
            <person name="Estrem S.T."/>
            <person name="Fritz L."/>
            <person name="Fu D.-J."/>
            <person name="Fuller W."/>
            <person name="Geringer C."/>
            <person name="Gilmour R."/>
            <person name="Glass J.S."/>
            <person name="Khoja H."/>
            <person name="Kraft A.R."/>
            <person name="Lagace R.E."/>
            <person name="LeBlanc D.J."/>
            <person name="Lee L.N."/>
            <person name="Lefkowitz E.J."/>
            <person name="Lu J."/>
            <person name="Matsushima P."/>
            <person name="McAhren S.M."/>
            <person name="McHenney M."/>
            <person name="McLeaster K."/>
            <person name="Mundy C.W."/>
            <person name="Nicas T.I."/>
            <person name="Norris F.H."/>
            <person name="O'Gara M."/>
            <person name="Peery R.B."/>
            <person name="Robertson G.T."/>
            <person name="Rockey P."/>
            <person name="Sun P.-M."/>
            <person name="Winkler M.E."/>
            <person name="Yang Y."/>
            <person name="Young-Bellido M."/>
            <person name="Zhao G."/>
            <person name="Zook C.A."/>
            <person name="Baltz R.H."/>
            <person name="Jaskunas S.R."/>
            <person name="Rosteck P.R. Jr."/>
            <person name="Skatrud P.L."/>
            <person name="Glass J.I."/>
        </authorList>
    </citation>
    <scope>NUCLEOTIDE SEQUENCE [LARGE SCALE GENOMIC DNA]</scope>
    <source>
        <strain>ATCC BAA-255 / R6</strain>
    </source>
</reference>
<gene>
    <name evidence="1" type="primary">rpmG2</name>
    <name type="ordered locus">spr1822</name>
</gene>
<comment type="similarity">
    <text evidence="1">Belongs to the bacterial ribosomal protein bL33 family.</text>
</comment>
<organism>
    <name type="scientific">Streptococcus pneumoniae (strain ATCC BAA-255 / R6)</name>
    <dbReference type="NCBI Taxonomy" id="171101"/>
    <lineage>
        <taxon>Bacteria</taxon>
        <taxon>Bacillati</taxon>
        <taxon>Bacillota</taxon>
        <taxon>Bacilli</taxon>
        <taxon>Lactobacillales</taxon>
        <taxon>Streptococcaceae</taxon>
        <taxon>Streptococcus</taxon>
    </lineage>
</organism>